<dbReference type="EC" id="1.1.1.169" evidence="1"/>
<dbReference type="EMBL" id="AL590842">
    <property type="protein sequence ID" value="CAL21766.1"/>
    <property type="molecule type" value="Genomic_DNA"/>
</dbReference>
<dbReference type="EMBL" id="AE009952">
    <property type="protein sequence ID" value="AAM84595.1"/>
    <property type="molecule type" value="Genomic_DNA"/>
</dbReference>
<dbReference type="EMBL" id="AE017042">
    <property type="protein sequence ID" value="AAS61025.1"/>
    <property type="molecule type" value="Genomic_DNA"/>
</dbReference>
<dbReference type="PIR" id="AC0385">
    <property type="entry name" value="AC0385"/>
</dbReference>
<dbReference type="RefSeq" id="WP_002208656.1">
    <property type="nucleotide sequence ID" value="NZ_WUCM01000043.1"/>
</dbReference>
<dbReference type="RefSeq" id="YP_002348076.1">
    <property type="nucleotide sequence ID" value="NC_003143.1"/>
</dbReference>
<dbReference type="SMR" id="Q8ZC51"/>
<dbReference type="IntAct" id="Q8ZC51">
    <property type="interactions" value="2"/>
</dbReference>
<dbReference type="STRING" id="214092.YPO3171"/>
<dbReference type="PaxDb" id="214092-YPO3171"/>
<dbReference type="DNASU" id="1145961"/>
<dbReference type="EnsemblBacteria" id="AAS61025">
    <property type="protein sequence ID" value="AAS61025"/>
    <property type="gene ID" value="YP_0760"/>
</dbReference>
<dbReference type="GeneID" id="57975541"/>
<dbReference type="KEGG" id="ype:YPO3171"/>
<dbReference type="KEGG" id="ypk:y1014"/>
<dbReference type="KEGG" id="ypm:YP_0760"/>
<dbReference type="PATRIC" id="fig|214092.21.peg.3627"/>
<dbReference type="eggNOG" id="COG1893">
    <property type="taxonomic scope" value="Bacteria"/>
</dbReference>
<dbReference type="HOGENOM" id="CLU_031468_0_1_6"/>
<dbReference type="OMA" id="ANYSSMY"/>
<dbReference type="OrthoDB" id="6530772at2"/>
<dbReference type="UniPathway" id="UPA00028">
    <property type="reaction ID" value="UER00004"/>
</dbReference>
<dbReference type="Proteomes" id="UP000000815">
    <property type="component" value="Chromosome"/>
</dbReference>
<dbReference type="Proteomes" id="UP000001019">
    <property type="component" value="Chromosome"/>
</dbReference>
<dbReference type="Proteomes" id="UP000002490">
    <property type="component" value="Chromosome"/>
</dbReference>
<dbReference type="GO" id="GO:0005737">
    <property type="term" value="C:cytoplasm"/>
    <property type="evidence" value="ECO:0000318"/>
    <property type="project" value="GO_Central"/>
</dbReference>
<dbReference type="GO" id="GO:0008677">
    <property type="term" value="F:2-dehydropantoate 2-reductase activity"/>
    <property type="evidence" value="ECO:0000318"/>
    <property type="project" value="GO_Central"/>
</dbReference>
<dbReference type="GO" id="GO:0050661">
    <property type="term" value="F:NADP binding"/>
    <property type="evidence" value="ECO:0000318"/>
    <property type="project" value="GO_Central"/>
</dbReference>
<dbReference type="GO" id="GO:0015940">
    <property type="term" value="P:pantothenate biosynthetic process"/>
    <property type="evidence" value="ECO:0007669"/>
    <property type="project" value="UniProtKB-UniPathway"/>
</dbReference>
<dbReference type="FunFam" id="1.10.1040.10:FF:000014">
    <property type="entry name" value="2-dehydropantoate 2-reductase"/>
    <property type="match status" value="1"/>
</dbReference>
<dbReference type="FunFam" id="3.40.50.720:FF:000162">
    <property type="entry name" value="2-dehydropantoate 2-reductase"/>
    <property type="match status" value="1"/>
</dbReference>
<dbReference type="Gene3D" id="1.10.1040.10">
    <property type="entry name" value="N-(1-d-carboxylethyl)-l-norvaline Dehydrogenase, domain 2"/>
    <property type="match status" value="1"/>
</dbReference>
<dbReference type="Gene3D" id="3.40.50.720">
    <property type="entry name" value="NAD(P)-binding Rossmann-like Domain"/>
    <property type="match status" value="1"/>
</dbReference>
<dbReference type="InterPro" id="IPR008927">
    <property type="entry name" value="6-PGluconate_DH-like_C_sf"/>
</dbReference>
<dbReference type="InterPro" id="IPR013328">
    <property type="entry name" value="6PGD_dom2"/>
</dbReference>
<dbReference type="InterPro" id="IPR003710">
    <property type="entry name" value="ApbA"/>
</dbReference>
<dbReference type="InterPro" id="IPR050838">
    <property type="entry name" value="Ketopantoate_reductase"/>
</dbReference>
<dbReference type="InterPro" id="IPR013752">
    <property type="entry name" value="KPA_reductase"/>
</dbReference>
<dbReference type="InterPro" id="IPR013332">
    <property type="entry name" value="KPR_N"/>
</dbReference>
<dbReference type="InterPro" id="IPR036291">
    <property type="entry name" value="NAD(P)-bd_dom_sf"/>
</dbReference>
<dbReference type="NCBIfam" id="TIGR00745">
    <property type="entry name" value="apbA_panE"/>
    <property type="match status" value="1"/>
</dbReference>
<dbReference type="NCBIfam" id="NF005087">
    <property type="entry name" value="PRK06522.1-1"/>
    <property type="match status" value="1"/>
</dbReference>
<dbReference type="PANTHER" id="PTHR43765:SF2">
    <property type="entry name" value="2-DEHYDROPANTOATE 2-REDUCTASE"/>
    <property type="match status" value="1"/>
</dbReference>
<dbReference type="PANTHER" id="PTHR43765">
    <property type="entry name" value="2-DEHYDROPANTOATE 2-REDUCTASE-RELATED"/>
    <property type="match status" value="1"/>
</dbReference>
<dbReference type="Pfam" id="PF02558">
    <property type="entry name" value="ApbA"/>
    <property type="match status" value="1"/>
</dbReference>
<dbReference type="Pfam" id="PF08546">
    <property type="entry name" value="ApbA_C"/>
    <property type="match status" value="1"/>
</dbReference>
<dbReference type="SUPFAM" id="SSF48179">
    <property type="entry name" value="6-phosphogluconate dehydrogenase C-terminal domain-like"/>
    <property type="match status" value="1"/>
</dbReference>
<dbReference type="SUPFAM" id="SSF51735">
    <property type="entry name" value="NAD(P)-binding Rossmann-fold domains"/>
    <property type="match status" value="1"/>
</dbReference>
<feature type="chain" id="PRO_0000157307" description="2-dehydropantoate 2-reductase">
    <location>
        <begin position="1"/>
        <end position="303"/>
    </location>
</feature>
<feature type="active site" description="Proton donor" evidence="1">
    <location>
        <position position="176"/>
    </location>
</feature>
<feature type="binding site" evidence="1">
    <location>
        <begin position="7"/>
        <end position="12"/>
    </location>
    <ligand>
        <name>NADP(+)</name>
        <dbReference type="ChEBI" id="CHEBI:58349"/>
    </ligand>
</feature>
<feature type="binding site" evidence="1">
    <location>
        <position position="98"/>
    </location>
    <ligand>
        <name>NADP(+)</name>
        <dbReference type="ChEBI" id="CHEBI:58349"/>
    </ligand>
</feature>
<feature type="binding site" evidence="1">
    <location>
        <position position="98"/>
    </location>
    <ligand>
        <name>substrate</name>
    </ligand>
</feature>
<feature type="binding site" evidence="1">
    <location>
        <position position="122"/>
    </location>
    <ligand>
        <name>NADP(+)</name>
        <dbReference type="ChEBI" id="CHEBI:58349"/>
    </ligand>
</feature>
<feature type="binding site" evidence="1">
    <location>
        <position position="180"/>
    </location>
    <ligand>
        <name>substrate</name>
    </ligand>
</feature>
<feature type="binding site" evidence="1">
    <location>
        <position position="184"/>
    </location>
    <ligand>
        <name>substrate</name>
    </ligand>
</feature>
<feature type="binding site" evidence="1">
    <location>
        <position position="194"/>
    </location>
    <ligand>
        <name>substrate</name>
    </ligand>
</feature>
<feature type="binding site" evidence="1">
    <location>
        <position position="244"/>
    </location>
    <ligand>
        <name>substrate</name>
    </ligand>
</feature>
<feature type="binding site" evidence="1">
    <location>
        <position position="256"/>
    </location>
    <ligand>
        <name>NADP(+)</name>
        <dbReference type="ChEBI" id="CHEBI:58349"/>
    </ligand>
</feature>
<organism>
    <name type="scientific">Yersinia pestis</name>
    <dbReference type="NCBI Taxonomy" id="632"/>
    <lineage>
        <taxon>Bacteria</taxon>
        <taxon>Pseudomonadati</taxon>
        <taxon>Pseudomonadota</taxon>
        <taxon>Gammaproteobacteria</taxon>
        <taxon>Enterobacterales</taxon>
        <taxon>Yersiniaceae</taxon>
        <taxon>Yersinia</taxon>
    </lineage>
</organism>
<protein>
    <recommendedName>
        <fullName evidence="1">2-dehydropantoate 2-reductase</fullName>
        <ecNumber evidence="1">1.1.1.169</ecNumber>
    </recommendedName>
    <alternativeName>
        <fullName evidence="1">Ketopantoate reductase</fullName>
        <shortName evidence="1">KPR</shortName>
    </alternativeName>
</protein>
<sequence>MKITVLGCGALGQLWLSMLHQQDHDVQGWLRVPQPFCSVNVIMLNGESFNRNLTTNDPKHLLQSELLLVCLKAWQVSSAVTALLPKLNPECKILLLHNGMGTQEELPLNEHVFLHGVTTHAARRDGNTIIHVASGMTHIGPTSSVIIDDNHLADTLHQALPDVAWHNDISAACWQKLAVNCVINPLTGLYNCRNGDVQRYPELIERLCAEVASVMEMEGYHTSTESLLSYVNNVIRSTADNTSSLLQDLRSQRHTEIDYITGYLLRRARSHGMALPENARLYELIKRKESDYERIGAGLPGSW</sequence>
<evidence type="ECO:0000250" key="1">
    <source>
        <dbReference type="UniProtKB" id="P0A9J4"/>
    </source>
</evidence>
<evidence type="ECO:0000305" key="2"/>
<name>PANE_YERPE</name>
<proteinExistence type="inferred from homology"/>
<reference key="1">
    <citation type="journal article" date="2001" name="Nature">
        <title>Genome sequence of Yersinia pestis, the causative agent of plague.</title>
        <authorList>
            <person name="Parkhill J."/>
            <person name="Wren B.W."/>
            <person name="Thomson N.R."/>
            <person name="Titball R.W."/>
            <person name="Holden M.T.G."/>
            <person name="Prentice M.B."/>
            <person name="Sebaihia M."/>
            <person name="James K.D."/>
            <person name="Churcher C.M."/>
            <person name="Mungall K.L."/>
            <person name="Baker S."/>
            <person name="Basham D."/>
            <person name="Bentley S.D."/>
            <person name="Brooks K."/>
            <person name="Cerdeno-Tarraga A.-M."/>
            <person name="Chillingworth T."/>
            <person name="Cronin A."/>
            <person name="Davies R.M."/>
            <person name="Davis P."/>
            <person name="Dougan G."/>
            <person name="Feltwell T."/>
            <person name="Hamlin N."/>
            <person name="Holroyd S."/>
            <person name="Jagels K."/>
            <person name="Karlyshev A.V."/>
            <person name="Leather S."/>
            <person name="Moule S."/>
            <person name="Oyston P.C.F."/>
            <person name="Quail M.A."/>
            <person name="Rutherford K.M."/>
            <person name="Simmonds M."/>
            <person name="Skelton J."/>
            <person name="Stevens K."/>
            <person name="Whitehead S."/>
            <person name="Barrell B.G."/>
        </authorList>
    </citation>
    <scope>NUCLEOTIDE SEQUENCE [LARGE SCALE GENOMIC DNA]</scope>
    <source>
        <strain>CO-92 / Biovar Orientalis</strain>
    </source>
</reference>
<reference key="2">
    <citation type="journal article" date="2002" name="J. Bacteriol.">
        <title>Genome sequence of Yersinia pestis KIM.</title>
        <authorList>
            <person name="Deng W."/>
            <person name="Burland V."/>
            <person name="Plunkett G. III"/>
            <person name="Boutin A."/>
            <person name="Mayhew G.F."/>
            <person name="Liss P."/>
            <person name="Perna N.T."/>
            <person name="Rose D.J."/>
            <person name="Mau B."/>
            <person name="Zhou S."/>
            <person name="Schwartz D.C."/>
            <person name="Fetherston J.D."/>
            <person name="Lindler L.E."/>
            <person name="Brubaker R.R."/>
            <person name="Plano G.V."/>
            <person name="Straley S.C."/>
            <person name="McDonough K.A."/>
            <person name="Nilles M.L."/>
            <person name="Matson J.S."/>
            <person name="Blattner F.R."/>
            <person name="Perry R.D."/>
        </authorList>
    </citation>
    <scope>NUCLEOTIDE SEQUENCE [LARGE SCALE GENOMIC DNA]</scope>
    <source>
        <strain>KIM10+ / Biovar Mediaevalis</strain>
    </source>
</reference>
<reference key="3">
    <citation type="journal article" date="2004" name="DNA Res.">
        <title>Complete genome sequence of Yersinia pestis strain 91001, an isolate avirulent to humans.</title>
        <authorList>
            <person name="Song Y."/>
            <person name="Tong Z."/>
            <person name="Wang J."/>
            <person name="Wang L."/>
            <person name="Guo Z."/>
            <person name="Han Y."/>
            <person name="Zhang J."/>
            <person name="Pei D."/>
            <person name="Zhou D."/>
            <person name="Qin H."/>
            <person name="Pang X."/>
            <person name="Han Y."/>
            <person name="Zhai J."/>
            <person name="Li M."/>
            <person name="Cui B."/>
            <person name="Qi Z."/>
            <person name="Jin L."/>
            <person name="Dai R."/>
            <person name="Chen F."/>
            <person name="Li S."/>
            <person name="Ye C."/>
            <person name="Du Z."/>
            <person name="Lin W."/>
            <person name="Wang J."/>
            <person name="Yu J."/>
            <person name="Yang H."/>
            <person name="Wang J."/>
            <person name="Huang P."/>
            <person name="Yang R."/>
        </authorList>
    </citation>
    <scope>NUCLEOTIDE SEQUENCE [LARGE SCALE GENOMIC DNA]</scope>
    <source>
        <strain>91001 / Biovar Mediaevalis</strain>
    </source>
</reference>
<gene>
    <name type="primary">panE</name>
    <name type="synonym">apbA</name>
    <name type="ordered locus">YPO3171</name>
    <name type="ordered locus">y1014</name>
    <name type="ordered locus">YP_0760</name>
</gene>
<keyword id="KW-0963">Cytoplasm</keyword>
<keyword id="KW-0521">NADP</keyword>
<keyword id="KW-0560">Oxidoreductase</keyword>
<keyword id="KW-0566">Pantothenate biosynthesis</keyword>
<keyword id="KW-1185">Reference proteome</keyword>
<accession>Q8ZC51</accession>
<accession>Q0WCB2</accession>
<comment type="function">
    <text evidence="1">Catalyzes the NADPH-dependent reduction of ketopantoate into pantoic acid.</text>
</comment>
<comment type="catalytic activity">
    <reaction evidence="1">
        <text>(R)-pantoate + NADP(+) = 2-dehydropantoate + NADPH + H(+)</text>
        <dbReference type="Rhea" id="RHEA:16233"/>
        <dbReference type="ChEBI" id="CHEBI:11561"/>
        <dbReference type="ChEBI" id="CHEBI:15378"/>
        <dbReference type="ChEBI" id="CHEBI:15980"/>
        <dbReference type="ChEBI" id="CHEBI:57783"/>
        <dbReference type="ChEBI" id="CHEBI:58349"/>
        <dbReference type="EC" id="1.1.1.169"/>
    </reaction>
</comment>
<comment type="pathway">
    <text evidence="1">Cofactor biosynthesis; (R)-pantothenate biosynthesis; (R)-pantoate from 3-methyl-2-oxobutanoate: step 2/2.</text>
</comment>
<comment type="subcellular location">
    <subcellularLocation>
        <location evidence="1">Cytoplasm</location>
    </subcellularLocation>
</comment>
<comment type="similarity">
    <text evidence="2">Belongs to the ketopantoate reductase family.</text>
</comment>